<reference key="1">
    <citation type="journal article" date="2004" name="Nat. Genet.">
        <title>Comparison of genome degradation in Paratyphi A and Typhi, human-restricted serovars of Salmonella enterica that cause typhoid.</title>
        <authorList>
            <person name="McClelland M."/>
            <person name="Sanderson K.E."/>
            <person name="Clifton S.W."/>
            <person name="Latreille P."/>
            <person name="Porwollik S."/>
            <person name="Sabo A."/>
            <person name="Meyer R."/>
            <person name="Bieri T."/>
            <person name="Ozersky P."/>
            <person name="McLellan M."/>
            <person name="Harkins C.R."/>
            <person name="Wang C."/>
            <person name="Nguyen C."/>
            <person name="Berghoff A."/>
            <person name="Elliott G."/>
            <person name="Kohlberg S."/>
            <person name="Strong C."/>
            <person name="Du F."/>
            <person name="Carter J."/>
            <person name="Kremizki C."/>
            <person name="Layman D."/>
            <person name="Leonard S."/>
            <person name="Sun H."/>
            <person name="Fulton L."/>
            <person name="Nash W."/>
            <person name="Miner T."/>
            <person name="Minx P."/>
            <person name="Delehaunty K."/>
            <person name="Fronick C."/>
            <person name="Magrini V."/>
            <person name="Nhan M."/>
            <person name="Warren W."/>
            <person name="Florea L."/>
            <person name="Spieth J."/>
            <person name="Wilson R.K."/>
        </authorList>
    </citation>
    <scope>NUCLEOTIDE SEQUENCE [LARGE SCALE GENOMIC DNA]</scope>
    <source>
        <strain>ATCC 9150 / SARB42</strain>
    </source>
</reference>
<name>METN2_SALPA</name>
<protein>
    <recommendedName>
        <fullName evidence="1">Methionine import ATP-binding protein MetN 2</fullName>
        <ecNumber evidence="1">7.4.2.11</ecNumber>
    </recommendedName>
</protein>
<evidence type="ECO:0000255" key="1">
    <source>
        <dbReference type="HAMAP-Rule" id="MF_01719"/>
    </source>
</evidence>
<proteinExistence type="inferred from homology"/>
<comment type="function">
    <text evidence="1">Part of the ABC transporter complex MetNIQ involved in methionine import. Responsible for energy coupling to the transport system.</text>
</comment>
<comment type="catalytic activity">
    <reaction evidence="1">
        <text>L-methionine(out) + ATP + H2O = L-methionine(in) + ADP + phosphate + H(+)</text>
        <dbReference type="Rhea" id="RHEA:29779"/>
        <dbReference type="ChEBI" id="CHEBI:15377"/>
        <dbReference type="ChEBI" id="CHEBI:15378"/>
        <dbReference type="ChEBI" id="CHEBI:30616"/>
        <dbReference type="ChEBI" id="CHEBI:43474"/>
        <dbReference type="ChEBI" id="CHEBI:57844"/>
        <dbReference type="ChEBI" id="CHEBI:456216"/>
        <dbReference type="EC" id="7.4.2.11"/>
    </reaction>
</comment>
<comment type="catalytic activity">
    <reaction evidence="1">
        <text>D-methionine(out) + ATP + H2O = D-methionine(in) + ADP + phosphate + H(+)</text>
        <dbReference type="Rhea" id="RHEA:29767"/>
        <dbReference type="ChEBI" id="CHEBI:15377"/>
        <dbReference type="ChEBI" id="CHEBI:15378"/>
        <dbReference type="ChEBI" id="CHEBI:30616"/>
        <dbReference type="ChEBI" id="CHEBI:43474"/>
        <dbReference type="ChEBI" id="CHEBI:57932"/>
        <dbReference type="ChEBI" id="CHEBI:456216"/>
        <dbReference type="EC" id="7.4.2.11"/>
    </reaction>
</comment>
<comment type="subunit">
    <text evidence="1">The complex is composed of two ATP-binding proteins (MetN), two transmembrane proteins (MetI) and a solute-binding protein (MetQ).</text>
</comment>
<comment type="subcellular location">
    <subcellularLocation>
        <location evidence="1">Cell inner membrane</location>
        <topology evidence="1">Peripheral membrane protein</topology>
    </subcellularLocation>
</comment>
<comment type="similarity">
    <text evidence="1">Belongs to the ABC transporter superfamily. Methionine importer (TC 3.A.1.24) family.</text>
</comment>
<keyword id="KW-0029">Amino-acid transport</keyword>
<keyword id="KW-0067">ATP-binding</keyword>
<keyword id="KW-0997">Cell inner membrane</keyword>
<keyword id="KW-1003">Cell membrane</keyword>
<keyword id="KW-0472">Membrane</keyword>
<keyword id="KW-0547">Nucleotide-binding</keyword>
<keyword id="KW-1278">Translocase</keyword>
<keyword id="KW-0813">Transport</keyword>
<accession>Q5PCG9</accession>
<organism>
    <name type="scientific">Salmonella paratyphi A (strain ATCC 9150 / SARB42)</name>
    <dbReference type="NCBI Taxonomy" id="295319"/>
    <lineage>
        <taxon>Bacteria</taxon>
        <taxon>Pseudomonadati</taxon>
        <taxon>Pseudomonadota</taxon>
        <taxon>Gammaproteobacteria</taxon>
        <taxon>Enterobacterales</taxon>
        <taxon>Enterobacteriaceae</taxon>
        <taxon>Salmonella</taxon>
    </lineage>
</organism>
<feature type="chain" id="PRO_0000270379" description="Methionine import ATP-binding protein MetN 2">
    <location>
        <begin position="1"/>
        <end position="338"/>
    </location>
</feature>
<feature type="domain" description="ABC transporter" evidence="1">
    <location>
        <begin position="2"/>
        <end position="242"/>
    </location>
</feature>
<feature type="binding site" evidence="1">
    <location>
        <begin position="39"/>
        <end position="46"/>
    </location>
    <ligand>
        <name>ATP</name>
        <dbReference type="ChEBI" id="CHEBI:30616"/>
    </ligand>
</feature>
<dbReference type="EC" id="7.4.2.11" evidence="1"/>
<dbReference type="EMBL" id="CP000026">
    <property type="protein sequence ID" value="AAV78098.1"/>
    <property type="molecule type" value="Genomic_DNA"/>
</dbReference>
<dbReference type="SMR" id="Q5PCG9"/>
<dbReference type="KEGG" id="spt:SPA2211"/>
<dbReference type="HOGENOM" id="CLU_000604_1_3_6"/>
<dbReference type="Proteomes" id="UP000008185">
    <property type="component" value="Chromosome"/>
</dbReference>
<dbReference type="GO" id="GO:0005886">
    <property type="term" value="C:plasma membrane"/>
    <property type="evidence" value="ECO:0007669"/>
    <property type="project" value="UniProtKB-SubCell"/>
</dbReference>
<dbReference type="GO" id="GO:0033232">
    <property type="term" value="F:ABC-type D-methionine transporter activity"/>
    <property type="evidence" value="ECO:0007669"/>
    <property type="project" value="UniProtKB-EC"/>
</dbReference>
<dbReference type="GO" id="GO:0005524">
    <property type="term" value="F:ATP binding"/>
    <property type="evidence" value="ECO:0007669"/>
    <property type="project" value="UniProtKB-KW"/>
</dbReference>
<dbReference type="GO" id="GO:0016887">
    <property type="term" value="F:ATP hydrolysis activity"/>
    <property type="evidence" value="ECO:0007669"/>
    <property type="project" value="InterPro"/>
</dbReference>
<dbReference type="CDD" id="cd03258">
    <property type="entry name" value="ABC_MetN_methionine_transporter"/>
    <property type="match status" value="1"/>
</dbReference>
<dbReference type="FunFam" id="3.40.50.300:FF:000056">
    <property type="entry name" value="Cell division ATP-binding protein FtsE"/>
    <property type="match status" value="1"/>
</dbReference>
<dbReference type="Gene3D" id="3.30.70.260">
    <property type="match status" value="1"/>
</dbReference>
<dbReference type="Gene3D" id="3.40.50.300">
    <property type="entry name" value="P-loop containing nucleotide triphosphate hydrolases"/>
    <property type="match status" value="1"/>
</dbReference>
<dbReference type="InterPro" id="IPR003593">
    <property type="entry name" value="AAA+_ATPase"/>
</dbReference>
<dbReference type="InterPro" id="IPR003439">
    <property type="entry name" value="ABC_transporter-like_ATP-bd"/>
</dbReference>
<dbReference type="InterPro" id="IPR017871">
    <property type="entry name" value="ABC_transporter-like_CS"/>
</dbReference>
<dbReference type="InterPro" id="IPR045865">
    <property type="entry name" value="ACT-like_dom_sf"/>
</dbReference>
<dbReference type="InterPro" id="IPR041701">
    <property type="entry name" value="MetN_ABC"/>
</dbReference>
<dbReference type="InterPro" id="IPR050086">
    <property type="entry name" value="MetN_ABC_transporter-like"/>
</dbReference>
<dbReference type="InterPro" id="IPR018449">
    <property type="entry name" value="NIL_domain"/>
</dbReference>
<dbReference type="InterPro" id="IPR027417">
    <property type="entry name" value="P-loop_NTPase"/>
</dbReference>
<dbReference type="PANTHER" id="PTHR43166">
    <property type="entry name" value="AMINO ACID IMPORT ATP-BINDING PROTEIN"/>
    <property type="match status" value="1"/>
</dbReference>
<dbReference type="PANTHER" id="PTHR43166:SF30">
    <property type="entry name" value="METHIONINE IMPORT ATP-BINDING PROTEIN METN"/>
    <property type="match status" value="1"/>
</dbReference>
<dbReference type="Pfam" id="PF00005">
    <property type="entry name" value="ABC_tran"/>
    <property type="match status" value="1"/>
</dbReference>
<dbReference type="Pfam" id="PF09383">
    <property type="entry name" value="NIL"/>
    <property type="match status" value="1"/>
</dbReference>
<dbReference type="SMART" id="SM00382">
    <property type="entry name" value="AAA"/>
    <property type="match status" value="1"/>
</dbReference>
<dbReference type="SMART" id="SM00930">
    <property type="entry name" value="NIL"/>
    <property type="match status" value="1"/>
</dbReference>
<dbReference type="SUPFAM" id="SSF55021">
    <property type="entry name" value="ACT-like"/>
    <property type="match status" value="1"/>
</dbReference>
<dbReference type="SUPFAM" id="SSF52540">
    <property type="entry name" value="P-loop containing nucleoside triphosphate hydrolases"/>
    <property type="match status" value="1"/>
</dbReference>
<dbReference type="PROSITE" id="PS00211">
    <property type="entry name" value="ABC_TRANSPORTER_1"/>
    <property type="match status" value="1"/>
</dbReference>
<dbReference type="PROSITE" id="PS50893">
    <property type="entry name" value="ABC_TRANSPORTER_2"/>
    <property type="match status" value="1"/>
</dbReference>
<dbReference type="PROSITE" id="PS51264">
    <property type="entry name" value="METN"/>
    <property type="match status" value="1"/>
</dbReference>
<gene>
    <name evidence="1" type="primary">metN2</name>
    <name type="ordered locus">SPA2211</name>
</gene>
<sequence>MIEIEKVCVDFTAGRGTPTRAVDNVSLHIAAGEIFGIVGTSGAGKSTLLRTLNALTRPSQGRVNVNGVEISALDGKALRQARQRIGMIFQHFNLMHTRTVAQNVAFSLKAAGWERSKIAPRVAEILTLVGLADKANRFPVQLSGGQKQRVGIARAIANHPDVLLCDEPTSALDLETSATILALLRQINAQLGITIVLITHEMNVIKSICDRVAVMSGGKVVESGEVFDVFAHPQHAFTQQLVSHTLNLTLPERLREHLPGQLLKILFIGDSAEQPVLSEVAIKFGVAVNILHGKIEYIGERALGILVVQLTAPHNPTAVAAAVEHIRQRTAQVEVIRG</sequence>